<organism>
    <name type="scientific">Burkholderia cenocepacia (strain HI2424)</name>
    <dbReference type="NCBI Taxonomy" id="331272"/>
    <lineage>
        <taxon>Bacteria</taxon>
        <taxon>Pseudomonadati</taxon>
        <taxon>Pseudomonadota</taxon>
        <taxon>Betaproteobacteria</taxon>
        <taxon>Burkholderiales</taxon>
        <taxon>Burkholderiaceae</taxon>
        <taxon>Burkholderia</taxon>
        <taxon>Burkholderia cepacia complex</taxon>
    </lineage>
</organism>
<gene>
    <name evidence="1" type="primary">pnp</name>
    <name type="ordered locus">Bcen2424_2253</name>
</gene>
<evidence type="ECO:0000255" key="1">
    <source>
        <dbReference type="HAMAP-Rule" id="MF_01595"/>
    </source>
</evidence>
<sequence length="715" mass="77022">MSMFNKVVKEFQWGQHKVRLETGEVARQASGAVIVDVEDTVVLATVVGAKSAKPGQDFFPLTVDYLEKTYSAGKIPGGFFRREGRPSEHETLTSRLIDRPLRPLFPEGFYNEVQVVIHVLSVNPEIPADIPALIGASAALAVSGLPFNGPVGAARVAYIDNAYVLNPTRDQLKASSLDLVVAGTERAVLMVESEADQLSEEVMLGAVVFGHEQMQIAIDAIHELVRDGGKPEWDWQPAPKNEALIARVTELAQNDLLAAYQLRDKQARSAKLKEVYAATSAKLEEDALAAGTVAADKATVGNVLFDIEAKIVRSQILNGEPRIDGRDTRTVRPIEIRTGVLPRTHGSALFTRGETQALVVATLGTKGDEQIIDALEGEYRERFMLHYNMPPFATGETGRVGSPKRREIGHGRLAKRALVKCLPSADEFGYSIRVVSEITESNGSSSMASVCGGCLALMDAGVPMKAHVAGIAMGLILEGNKFAVLTDILGDEDHLGDMDFKVAGTEQGVTALQMDIKIQGITKEIMQVALAQAKEGRLHILGKMTSAVSGANTQLSEFAPRMITVKINPEKIRDVIGKGGSVIRALTEETGTTIDISDDGVVTIASTSSEGMAEAKKRIEQITAEIEVGQVYEGTVLKLLDFGAIVNLLPGKDGLLHISEIVNERVKDINDYLKEGQQVKVKVIQTDEKGRVRLSAKALLNEAAAAAQSDTPPQQ</sequence>
<comment type="function">
    <text evidence="1">Involved in mRNA degradation. Catalyzes the phosphorolysis of single-stranded polyribonucleotides processively in the 3'- to 5'-direction.</text>
</comment>
<comment type="catalytic activity">
    <reaction evidence="1">
        <text>RNA(n+1) + phosphate = RNA(n) + a ribonucleoside 5'-diphosphate</text>
        <dbReference type="Rhea" id="RHEA:22096"/>
        <dbReference type="Rhea" id="RHEA-COMP:14527"/>
        <dbReference type="Rhea" id="RHEA-COMP:17342"/>
        <dbReference type="ChEBI" id="CHEBI:43474"/>
        <dbReference type="ChEBI" id="CHEBI:57930"/>
        <dbReference type="ChEBI" id="CHEBI:140395"/>
        <dbReference type="EC" id="2.7.7.8"/>
    </reaction>
</comment>
<comment type="cofactor">
    <cofactor evidence="1">
        <name>Mg(2+)</name>
        <dbReference type="ChEBI" id="CHEBI:18420"/>
    </cofactor>
</comment>
<comment type="subcellular location">
    <subcellularLocation>
        <location evidence="1">Cytoplasm</location>
    </subcellularLocation>
</comment>
<comment type="similarity">
    <text evidence="1">Belongs to the polyribonucleotide nucleotidyltransferase family.</text>
</comment>
<accession>A0K927</accession>
<dbReference type="EC" id="2.7.7.8" evidence="1"/>
<dbReference type="EMBL" id="CP000458">
    <property type="protein sequence ID" value="ABK09004.1"/>
    <property type="molecule type" value="Genomic_DNA"/>
</dbReference>
<dbReference type="RefSeq" id="WP_011545817.1">
    <property type="nucleotide sequence ID" value="NC_008542.1"/>
</dbReference>
<dbReference type="SMR" id="A0K927"/>
<dbReference type="KEGG" id="bch:Bcen2424_2253"/>
<dbReference type="HOGENOM" id="CLU_004217_2_2_4"/>
<dbReference type="GO" id="GO:0005829">
    <property type="term" value="C:cytosol"/>
    <property type="evidence" value="ECO:0007669"/>
    <property type="project" value="TreeGrafter"/>
</dbReference>
<dbReference type="GO" id="GO:0000175">
    <property type="term" value="F:3'-5'-RNA exonuclease activity"/>
    <property type="evidence" value="ECO:0007669"/>
    <property type="project" value="TreeGrafter"/>
</dbReference>
<dbReference type="GO" id="GO:0000287">
    <property type="term" value="F:magnesium ion binding"/>
    <property type="evidence" value="ECO:0007669"/>
    <property type="project" value="UniProtKB-UniRule"/>
</dbReference>
<dbReference type="GO" id="GO:0004654">
    <property type="term" value="F:polyribonucleotide nucleotidyltransferase activity"/>
    <property type="evidence" value="ECO:0007669"/>
    <property type="project" value="UniProtKB-UniRule"/>
</dbReference>
<dbReference type="GO" id="GO:0003723">
    <property type="term" value="F:RNA binding"/>
    <property type="evidence" value="ECO:0007669"/>
    <property type="project" value="UniProtKB-UniRule"/>
</dbReference>
<dbReference type="GO" id="GO:0006402">
    <property type="term" value="P:mRNA catabolic process"/>
    <property type="evidence" value="ECO:0007669"/>
    <property type="project" value="UniProtKB-UniRule"/>
</dbReference>
<dbReference type="GO" id="GO:0006396">
    <property type="term" value="P:RNA processing"/>
    <property type="evidence" value="ECO:0007669"/>
    <property type="project" value="InterPro"/>
</dbReference>
<dbReference type="CDD" id="cd02393">
    <property type="entry name" value="KH-I_PNPase"/>
    <property type="match status" value="1"/>
</dbReference>
<dbReference type="CDD" id="cd11363">
    <property type="entry name" value="RNase_PH_PNPase_1"/>
    <property type="match status" value="1"/>
</dbReference>
<dbReference type="CDD" id="cd11364">
    <property type="entry name" value="RNase_PH_PNPase_2"/>
    <property type="match status" value="1"/>
</dbReference>
<dbReference type="CDD" id="cd04472">
    <property type="entry name" value="S1_PNPase"/>
    <property type="match status" value="1"/>
</dbReference>
<dbReference type="FunFam" id="3.30.1370.10:FF:000001">
    <property type="entry name" value="Polyribonucleotide nucleotidyltransferase"/>
    <property type="match status" value="1"/>
</dbReference>
<dbReference type="FunFam" id="3.30.230.70:FF:000001">
    <property type="entry name" value="Polyribonucleotide nucleotidyltransferase"/>
    <property type="match status" value="1"/>
</dbReference>
<dbReference type="FunFam" id="3.30.230.70:FF:000002">
    <property type="entry name" value="Polyribonucleotide nucleotidyltransferase"/>
    <property type="match status" value="1"/>
</dbReference>
<dbReference type="FunFam" id="2.40.50.140:FF:000189">
    <property type="entry name" value="Polyribonucleotide nucleotidyltransferase, putative"/>
    <property type="match status" value="1"/>
</dbReference>
<dbReference type="Gene3D" id="3.30.230.70">
    <property type="entry name" value="GHMP Kinase, N-terminal domain"/>
    <property type="match status" value="2"/>
</dbReference>
<dbReference type="Gene3D" id="3.30.1370.10">
    <property type="entry name" value="K Homology domain, type 1"/>
    <property type="match status" value="1"/>
</dbReference>
<dbReference type="Gene3D" id="2.40.50.140">
    <property type="entry name" value="Nucleic acid-binding proteins"/>
    <property type="match status" value="1"/>
</dbReference>
<dbReference type="HAMAP" id="MF_01595">
    <property type="entry name" value="PNPase"/>
    <property type="match status" value="1"/>
</dbReference>
<dbReference type="InterPro" id="IPR001247">
    <property type="entry name" value="ExoRNase_PH_dom1"/>
</dbReference>
<dbReference type="InterPro" id="IPR015847">
    <property type="entry name" value="ExoRNase_PH_dom2"/>
</dbReference>
<dbReference type="InterPro" id="IPR036345">
    <property type="entry name" value="ExoRNase_PH_dom2_sf"/>
</dbReference>
<dbReference type="InterPro" id="IPR004087">
    <property type="entry name" value="KH_dom"/>
</dbReference>
<dbReference type="InterPro" id="IPR004088">
    <property type="entry name" value="KH_dom_type_1"/>
</dbReference>
<dbReference type="InterPro" id="IPR036612">
    <property type="entry name" value="KH_dom_type_1_sf"/>
</dbReference>
<dbReference type="InterPro" id="IPR012340">
    <property type="entry name" value="NA-bd_OB-fold"/>
</dbReference>
<dbReference type="InterPro" id="IPR012162">
    <property type="entry name" value="PNPase"/>
</dbReference>
<dbReference type="InterPro" id="IPR027408">
    <property type="entry name" value="PNPase/RNase_PH_dom_sf"/>
</dbReference>
<dbReference type="InterPro" id="IPR015848">
    <property type="entry name" value="PNPase_PH_RNA-bd_bac/org-type"/>
</dbReference>
<dbReference type="InterPro" id="IPR020568">
    <property type="entry name" value="Ribosomal_Su5_D2-typ_SF"/>
</dbReference>
<dbReference type="InterPro" id="IPR003029">
    <property type="entry name" value="S1_domain"/>
</dbReference>
<dbReference type="NCBIfam" id="TIGR03591">
    <property type="entry name" value="polynuc_phos"/>
    <property type="match status" value="1"/>
</dbReference>
<dbReference type="NCBIfam" id="NF008805">
    <property type="entry name" value="PRK11824.1"/>
    <property type="match status" value="1"/>
</dbReference>
<dbReference type="PANTHER" id="PTHR11252">
    <property type="entry name" value="POLYRIBONUCLEOTIDE NUCLEOTIDYLTRANSFERASE"/>
    <property type="match status" value="1"/>
</dbReference>
<dbReference type="PANTHER" id="PTHR11252:SF0">
    <property type="entry name" value="POLYRIBONUCLEOTIDE NUCLEOTIDYLTRANSFERASE 1, MITOCHONDRIAL"/>
    <property type="match status" value="1"/>
</dbReference>
<dbReference type="Pfam" id="PF00013">
    <property type="entry name" value="KH_1"/>
    <property type="match status" value="1"/>
</dbReference>
<dbReference type="Pfam" id="PF03726">
    <property type="entry name" value="PNPase"/>
    <property type="match status" value="1"/>
</dbReference>
<dbReference type="Pfam" id="PF01138">
    <property type="entry name" value="RNase_PH"/>
    <property type="match status" value="2"/>
</dbReference>
<dbReference type="Pfam" id="PF03725">
    <property type="entry name" value="RNase_PH_C"/>
    <property type="match status" value="2"/>
</dbReference>
<dbReference type="Pfam" id="PF00575">
    <property type="entry name" value="S1"/>
    <property type="match status" value="1"/>
</dbReference>
<dbReference type="PIRSF" id="PIRSF005499">
    <property type="entry name" value="PNPase"/>
    <property type="match status" value="1"/>
</dbReference>
<dbReference type="SMART" id="SM00322">
    <property type="entry name" value="KH"/>
    <property type="match status" value="1"/>
</dbReference>
<dbReference type="SMART" id="SM00316">
    <property type="entry name" value="S1"/>
    <property type="match status" value="1"/>
</dbReference>
<dbReference type="SUPFAM" id="SSF54791">
    <property type="entry name" value="Eukaryotic type KH-domain (KH-domain type I)"/>
    <property type="match status" value="1"/>
</dbReference>
<dbReference type="SUPFAM" id="SSF50249">
    <property type="entry name" value="Nucleic acid-binding proteins"/>
    <property type="match status" value="1"/>
</dbReference>
<dbReference type="SUPFAM" id="SSF55666">
    <property type="entry name" value="Ribonuclease PH domain 2-like"/>
    <property type="match status" value="2"/>
</dbReference>
<dbReference type="SUPFAM" id="SSF54211">
    <property type="entry name" value="Ribosomal protein S5 domain 2-like"/>
    <property type="match status" value="2"/>
</dbReference>
<dbReference type="PROSITE" id="PS50084">
    <property type="entry name" value="KH_TYPE_1"/>
    <property type="match status" value="1"/>
</dbReference>
<dbReference type="PROSITE" id="PS50126">
    <property type="entry name" value="S1"/>
    <property type="match status" value="1"/>
</dbReference>
<reference key="1">
    <citation type="submission" date="2006-08" db="EMBL/GenBank/DDBJ databases">
        <title>Complete sequence of chromosome 1 of Burkholderia cenocepacia HI2424.</title>
        <authorList>
            <person name="Copeland A."/>
            <person name="Lucas S."/>
            <person name="Lapidus A."/>
            <person name="Barry K."/>
            <person name="Detter J.C."/>
            <person name="Glavina del Rio T."/>
            <person name="Hammon N."/>
            <person name="Israni S."/>
            <person name="Pitluck S."/>
            <person name="Chain P."/>
            <person name="Malfatti S."/>
            <person name="Shin M."/>
            <person name="Vergez L."/>
            <person name="Schmutz J."/>
            <person name="Larimer F."/>
            <person name="Land M."/>
            <person name="Hauser L."/>
            <person name="Kyrpides N."/>
            <person name="Kim E."/>
            <person name="LiPuma J.J."/>
            <person name="Gonzalez C.F."/>
            <person name="Konstantinidis K."/>
            <person name="Tiedje J.M."/>
            <person name="Richardson P."/>
        </authorList>
    </citation>
    <scope>NUCLEOTIDE SEQUENCE [LARGE SCALE GENOMIC DNA]</scope>
    <source>
        <strain>HI2424</strain>
    </source>
</reference>
<feature type="chain" id="PRO_0000329552" description="Polyribonucleotide nucleotidyltransferase">
    <location>
        <begin position="1"/>
        <end position="715"/>
    </location>
</feature>
<feature type="domain" description="KH" evidence="1">
    <location>
        <begin position="560"/>
        <end position="619"/>
    </location>
</feature>
<feature type="domain" description="S1 motif" evidence="1">
    <location>
        <begin position="629"/>
        <end position="697"/>
    </location>
</feature>
<feature type="binding site" evidence="1">
    <location>
        <position position="493"/>
    </location>
    <ligand>
        <name>Mg(2+)</name>
        <dbReference type="ChEBI" id="CHEBI:18420"/>
    </ligand>
</feature>
<feature type="binding site" evidence="1">
    <location>
        <position position="499"/>
    </location>
    <ligand>
        <name>Mg(2+)</name>
        <dbReference type="ChEBI" id="CHEBI:18420"/>
    </ligand>
</feature>
<protein>
    <recommendedName>
        <fullName evidence="1">Polyribonucleotide nucleotidyltransferase</fullName>
        <ecNumber evidence="1">2.7.7.8</ecNumber>
    </recommendedName>
    <alternativeName>
        <fullName evidence="1">Polynucleotide phosphorylase</fullName>
        <shortName evidence="1">PNPase</shortName>
    </alternativeName>
</protein>
<keyword id="KW-0963">Cytoplasm</keyword>
<keyword id="KW-0460">Magnesium</keyword>
<keyword id="KW-0479">Metal-binding</keyword>
<keyword id="KW-0548">Nucleotidyltransferase</keyword>
<keyword id="KW-0694">RNA-binding</keyword>
<keyword id="KW-0808">Transferase</keyword>
<name>PNP_BURCH</name>
<proteinExistence type="inferred from homology"/>